<comment type="similarity">
    <text evidence="1">Belongs to the SfsA family.</text>
</comment>
<feature type="chain" id="PRO_0000152318" description="Sugar fermentation stimulation protein homolog">
    <location>
        <begin position="1"/>
        <end position="238"/>
    </location>
</feature>
<accession>Q7MHV9</accession>
<reference key="1">
    <citation type="journal article" date="2003" name="Genome Res.">
        <title>Comparative genome analysis of Vibrio vulnificus, a marine pathogen.</title>
        <authorList>
            <person name="Chen C.-Y."/>
            <person name="Wu K.-M."/>
            <person name="Chang Y.-C."/>
            <person name="Chang C.-H."/>
            <person name="Tsai H.-C."/>
            <person name="Liao T.-L."/>
            <person name="Liu Y.-M."/>
            <person name="Chen H.-J."/>
            <person name="Shen A.B.-T."/>
            <person name="Li J.-C."/>
            <person name="Su T.-L."/>
            <person name="Shao C.-P."/>
            <person name="Lee C.-T."/>
            <person name="Hor L.-I."/>
            <person name="Tsai S.-F."/>
        </authorList>
    </citation>
    <scope>NUCLEOTIDE SEQUENCE [LARGE SCALE GENOMIC DNA]</scope>
    <source>
        <strain>YJ016</strain>
    </source>
</reference>
<dbReference type="EMBL" id="BA000037">
    <property type="protein sequence ID" value="BAC95522.1"/>
    <property type="molecule type" value="Genomic_DNA"/>
</dbReference>
<dbReference type="RefSeq" id="WP_011151115.1">
    <property type="nucleotide sequence ID" value="NC_005139.1"/>
</dbReference>
<dbReference type="SMR" id="Q7MHV9"/>
<dbReference type="STRING" id="672.VV93_v1c24700"/>
<dbReference type="KEGG" id="vvy:VV2758"/>
<dbReference type="eggNOG" id="COG1489">
    <property type="taxonomic scope" value="Bacteria"/>
</dbReference>
<dbReference type="HOGENOM" id="CLU_052299_2_0_6"/>
<dbReference type="Proteomes" id="UP000002675">
    <property type="component" value="Chromosome I"/>
</dbReference>
<dbReference type="GO" id="GO:0003677">
    <property type="term" value="F:DNA binding"/>
    <property type="evidence" value="ECO:0007669"/>
    <property type="project" value="InterPro"/>
</dbReference>
<dbReference type="CDD" id="cd22359">
    <property type="entry name" value="SfsA-like_bacterial"/>
    <property type="match status" value="1"/>
</dbReference>
<dbReference type="FunFam" id="2.40.50.580:FF:000001">
    <property type="entry name" value="Sugar fermentation stimulation protein A"/>
    <property type="match status" value="1"/>
</dbReference>
<dbReference type="FunFam" id="3.40.1350.60:FF:000001">
    <property type="entry name" value="Sugar fermentation stimulation protein A"/>
    <property type="match status" value="1"/>
</dbReference>
<dbReference type="Gene3D" id="2.40.50.580">
    <property type="match status" value="1"/>
</dbReference>
<dbReference type="Gene3D" id="3.40.1350.60">
    <property type="match status" value="1"/>
</dbReference>
<dbReference type="HAMAP" id="MF_00095">
    <property type="entry name" value="SfsA"/>
    <property type="match status" value="1"/>
</dbReference>
<dbReference type="InterPro" id="IPR005224">
    <property type="entry name" value="SfsA"/>
</dbReference>
<dbReference type="InterPro" id="IPR040452">
    <property type="entry name" value="SfsA_C"/>
</dbReference>
<dbReference type="InterPro" id="IPR041465">
    <property type="entry name" value="SfsA_N"/>
</dbReference>
<dbReference type="NCBIfam" id="TIGR00230">
    <property type="entry name" value="sfsA"/>
    <property type="match status" value="1"/>
</dbReference>
<dbReference type="PANTHER" id="PTHR30545">
    <property type="entry name" value="SUGAR FERMENTATION STIMULATION PROTEIN A"/>
    <property type="match status" value="1"/>
</dbReference>
<dbReference type="PANTHER" id="PTHR30545:SF2">
    <property type="entry name" value="SUGAR FERMENTATION STIMULATION PROTEIN A"/>
    <property type="match status" value="1"/>
</dbReference>
<dbReference type="Pfam" id="PF03749">
    <property type="entry name" value="SfsA"/>
    <property type="match status" value="1"/>
</dbReference>
<dbReference type="Pfam" id="PF17746">
    <property type="entry name" value="SfsA_N"/>
    <property type="match status" value="1"/>
</dbReference>
<proteinExistence type="inferred from homology"/>
<sequence length="238" mass="26438">MHFEPALDCALLQKRYKRFLADVTYQSGDTGTIHCANTGAMTGCATPGDKVWYSTSNNTKRKYPHSWEITETQQGHLICVNTIRANQLTVEAIEQGWIKELSGYEQLQTEVKYGHENSRIDILLSASDRPACYIEVKSVTLLDDTEPGQGFFPDAVTTRGQKHLRELTEMAQNGSRAILLFAVLHSGIEKVAAALHIDAKYSQLLKQAQKAGVEVLCYKAEISNTEIKLNSAIAFNNS</sequence>
<evidence type="ECO:0000255" key="1">
    <source>
        <dbReference type="HAMAP-Rule" id="MF_00095"/>
    </source>
</evidence>
<name>SFSA_VIBVY</name>
<protein>
    <recommendedName>
        <fullName evidence="1">Sugar fermentation stimulation protein homolog</fullName>
    </recommendedName>
</protein>
<organism>
    <name type="scientific">Vibrio vulnificus (strain YJ016)</name>
    <dbReference type="NCBI Taxonomy" id="196600"/>
    <lineage>
        <taxon>Bacteria</taxon>
        <taxon>Pseudomonadati</taxon>
        <taxon>Pseudomonadota</taxon>
        <taxon>Gammaproteobacteria</taxon>
        <taxon>Vibrionales</taxon>
        <taxon>Vibrionaceae</taxon>
        <taxon>Vibrio</taxon>
    </lineage>
</organism>
<gene>
    <name evidence="1" type="primary">sfsA</name>
    <name type="ordered locus">VV2758</name>
</gene>